<feature type="transit peptide" description="Mitochondrion" evidence="3">
    <location>
        <begin position="1"/>
        <end position="19"/>
    </location>
</feature>
<feature type="chain" id="PRO_0000008651" description="Electron transfer flavoprotein subunit alpha, mitochondrial">
    <location>
        <begin position="20"/>
        <end position="333"/>
    </location>
</feature>
<feature type="region of interest" description="Domain I" evidence="1">
    <location>
        <begin position="20"/>
        <end position="204"/>
    </location>
</feature>
<feature type="region of interest" description="Domain II" evidence="1">
    <location>
        <begin position="205"/>
        <end position="333"/>
    </location>
</feature>
<feature type="binding site" evidence="1">
    <location>
        <position position="223"/>
    </location>
    <ligand>
        <name>FAD</name>
        <dbReference type="ChEBI" id="CHEBI:57692"/>
    </ligand>
</feature>
<feature type="binding site" evidence="1">
    <location>
        <position position="248"/>
    </location>
    <ligand>
        <name>FAD</name>
        <dbReference type="ChEBI" id="CHEBI:57692"/>
    </ligand>
</feature>
<feature type="binding site" evidence="1">
    <location>
        <begin position="263"/>
        <end position="266"/>
    </location>
    <ligand>
        <name>FAD</name>
        <dbReference type="ChEBI" id="CHEBI:57692"/>
    </ligand>
</feature>
<feature type="binding site" evidence="1">
    <location>
        <begin position="281"/>
        <end position="286"/>
    </location>
    <ligand>
        <name>FAD</name>
        <dbReference type="ChEBI" id="CHEBI:57692"/>
    </ligand>
</feature>
<feature type="binding site" evidence="1">
    <location>
        <position position="300"/>
    </location>
    <ligand>
        <name>FAD</name>
        <dbReference type="ChEBI" id="CHEBI:57692"/>
    </ligand>
</feature>
<feature type="binding site" evidence="1">
    <location>
        <begin position="318"/>
        <end position="319"/>
    </location>
    <ligand>
        <name>FAD</name>
        <dbReference type="ChEBI" id="CHEBI:57692"/>
    </ligand>
</feature>
<feature type="modified residue" description="N6-acetyllysine; alternate" evidence="2">
    <location>
        <position position="59"/>
    </location>
</feature>
<feature type="modified residue" description="N6-succinyllysine; alternate" evidence="2">
    <location>
        <position position="59"/>
    </location>
</feature>
<feature type="modified residue" description="N6-acetyllysine" evidence="2">
    <location>
        <position position="62"/>
    </location>
</feature>
<feature type="modified residue" description="N6-acetyllysine; alternate" evidence="2">
    <location>
        <position position="69"/>
    </location>
</feature>
<feature type="modified residue" description="N6-succinyllysine; alternate" evidence="2">
    <location>
        <position position="69"/>
    </location>
</feature>
<feature type="modified residue" description="N6-acetyllysine" evidence="2">
    <location>
        <position position="75"/>
    </location>
</feature>
<feature type="modified residue" description="Phosphothreonine" evidence="2">
    <location>
        <position position="93"/>
    </location>
</feature>
<feature type="modified residue" description="N6-acetyllysine" evidence="2">
    <location>
        <position position="101"/>
    </location>
</feature>
<feature type="modified residue" description="N6-acetyllysine" evidence="2">
    <location>
        <position position="139"/>
    </location>
</feature>
<feature type="modified residue" description="Phosphoserine" evidence="1">
    <location>
        <position position="140"/>
    </location>
</feature>
<feature type="modified residue" description="N6-acetyllysine; alternate" evidence="2">
    <location>
        <position position="158"/>
    </location>
</feature>
<feature type="modified residue" description="N6-succinyllysine; alternate" evidence="2">
    <location>
        <position position="158"/>
    </location>
</feature>
<feature type="modified residue" description="N6-acetyllysine" evidence="2">
    <location>
        <position position="164"/>
    </location>
</feature>
<feature type="modified residue" description="N6-succinyllysine" evidence="2">
    <location>
        <position position="187"/>
    </location>
</feature>
<feature type="modified residue" description="N6-acetyllysine; alternate" evidence="2">
    <location>
        <position position="203"/>
    </location>
</feature>
<feature type="modified residue" description="N6-succinyllysine; alternate" evidence="2">
    <location>
        <position position="203"/>
    </location>
</feature>
<feature type="modified residue" description="N6-succinyllysine" evidence="2">
    <location>
        <position position="216"/>
    </location>
</feature>
<feature type="modified residue" description="N6-acetyllysine; alternate" evidence="2">
    <location>
        <position position="226"/>
    </location>
</feature>
<feature type="modified residue" description="N6-succinyllysine; alternate" evidence="2">
    <location>
        <position position="226"/>
    </location>
</feature>
<feature type="modified residue" description="N6-acetyllysine; alternate" evidence="2">
    <location>
        <position position="232"/>
    </location>
</feature>
<feature type="modified residue" description="N6-succinyllysine; alternate" evidence="2">
    <location>
        <position position="232"/>
    </location>
</feature>
<feature type="modified residue" description="N6-succinyllysine" evidence="2">
    <location>
        <position position="301"/>
    </location>
</feature>
<accession>Q8HXY0</accession>
<dbReference type="EMBL" id="AB083309">
    <property type="protein sequence ID" value="BAC20588.1"/>
    <property type="molecule type" value="mRNA"/>
</dbReference>
<dbReference type="RefSeq" id="NP_001270273.1">
    <property type="nucleotide sequence ID" value="NM_001283344.1"/>
</dbReference>
<dbReference type="SMR" id="Q8HXY0"/>
<dbReference type="STRING" id="9541.ENSMFAP00000011985"/>
<dbReference type="eggNOG" id="KOG3954">
    <property type="taxonomic scope" value="Eukaryota"/>
</dbReference>
<dbReference type="Proteomes" id="UP000233100">
    <property type="component" value="Unplaced"/>
</dbReference>
<dbReference type="GO" id="GO:0005759">
    <property type="term" value="C:mitochondrial matrix"/>
    <property type="evidence" value="ECO:0007669"/>
    <property type="project" value="UniProtKB-SubCell"/>
</dbReference>
<dbReference type="GO" id="GO:0009055">
    <property type="term" value="F:electron transfer activity"/>
    <property type="evidence" value="ECO:0000250"/>
    <property type="project" value="UniProtKB"/>
</dbReference>
<dbReference type="GO" id="GO:0050660">
    <property type="term" value="F:flavin adenine dinucleotide binding"/>
    <property type="evidence" value="ECO:0007669"/>
    <property type="project" value="InterPro"/>
</dbReference>
<dbReference type="GO" id="GO:0033539">
    <property type="term" value="P:fatty acid beta-oxidation using acyl-CoA dehydrogenase"/>
    <property type="evidence" value="ECO:0000250"/>
    <property type="project" value="UniProtKB"/>
</dbReference>
<dbReference type="CDD" id="cd01715">
    <property type="entry name" value="ETF_alpha"/>
    <property type="match status" value="1"/>
</dbReference>
<dbReference type="FunFam" id="3.40.50.620:FF:000041">
    <property type="entry name" value="Electron transfer flavoprotein alpha subunit"/>
    <property type="match status" value="1"/>
</dbReference>
<dbReference type="FunFam" id="3.40.50.1220:FF:000001">
    <property type="entry name" value="Electron transfer flavoprotein, alpha subunit"/>
    <property type="match status" value="1"/>
</dbReference>
<dbReference type="Gene3D" id="3.40.50.620">
    <property type="entry name" value="HUPs"/>
    <property type="match status" value="1"/>
</dbReference>
<dbReference type="Gene3D" id="3.40.50.1220">
    <property type="entry name" value="TPP-binding domain"/>
    <property type="match status" value="1"/>
</dbReference>
<dbReference type="InterPro" id="IPR029035">
    <property type="entry name" value="DHS-like_NAD/FAD-binding_dom"/>
</dbReference>
<dbReference type="InterPro" id="IPR014730">
    <property type="entry name" value="ETF_a/b_N"/>
</dbReference>
<dbReference type="InterPro" id="IPR001308">
    <property type="entry name" value="ETF_a/FixB"/>
</dbReference>
<dbReference type="InterPro" id="IPR033947">
    <property type="entry name" value="ETF_alpha_N"/>
</dbReference>
<dbReference type="InterPro" id="IPR014731">
    <property type="entry name" value="ETF_asu_C"/>
</dbReference>
<dbReference type="InterPro" id="IPR018206">
    <property type="entry name" value="ETF_asu_C_CS"/>
</dbReference>
<dbReference type="InterPro" id="IPR014729">
    <property type="entry name" value="Rossmann-like_a/b/a_fold"/>
</dbReference>
<dbReference type="PANTHER" id="PTHR43153">
    <property type="entry name" value="ELECTRON TRANSFER FLAVOPROTEIN ALPHA"/>
    <property type="match status" value="1"/>
</dbReference>
<dbReference type="PANTHER" id="PTHR43153:SF1">
    <property type="entry name" value="ELECTRON TRANSFER FLAVOPROTEIN SUBUNIT ALPHA, MITOCHONDRIAL"/>
    <property type="match status" value="1"/>
</dbReference>
<dbReference type="Pfam" id="PF01012">
    <property type="entry name" value="ETF"/>
    <property type="match status" value="1"/>
</dbReference>
<dbReference type="Pfam" id="PF00766">
    <property type="entry name" value="ETF_alpha"/>
    <property type="match status" value="1"/>
</dbReference>
<dbReference type="PIRSF" id="PIRSF000089">
    <property type="entry name" value="Electra_flavoP_a"/>
    <property type="match status" value="1"/>
</dbReference>
<dbReference type="SMART" id="SM00893">
    <property type="entry name" value="ETF"/>
    <property type="match status" value="1"/>
</dbReference>
<dbReference type="SUPFAM" id="SSF52402">
    <property type="entry name" value="Adenine nucleotide alpha hydrolases-like"/>
    <property type="match status" value="1"/>
</dbReference>
<dbReference type="SUPFAM" id="SSF52467">
    <property type="entry name" value="DHS-like NAD/FAD-binding domain"/>
    <property type="match status" value="1"/>
</dbReference>
<dbReference type="PROSITE" id="PS00696">
    <property type="entry name" value="ETF_ALPHA"/>
    <property type="match status" value="1"/>
</dbReference>
<protein>
    <recommendedName>
        <fullName>Electron transfer flavoprotein subunit alpha, mitochondrial</fullName>
        <shortName>Alpha-ETF</shortName>
    </recommendedName>
</protein>
<gene>
    <name type="primary">ETFA</name>
    <name type="ORF">QtrA-10768</name>
</gene>
<keyword id="KW-0007">Acetylation</keyword>
<keyword id="KW-0249">Electron transport</keyword>
<keyword id="KW-0274">FAD</keyword>
<keyword id="KW-0285">Flavoprotein</keyword>
<keyword id="KW-0496">Mitochondrion</keyword>
<keyword id="KW-0597">Phosphoprotein</keyword>
<keyword id="KW-1185">Reference proteome</keyword>
<keyword id="KW-0809">Transit peptide</keyword>
<keyword id="KW-0813">Transport</keyword>
<reference key="1">
    <citation type="submission" date="2002-04" db="EMBL/GenBank/DDBJ databases">
        <title>Isolation and characterization of cDNA for macaque neurological disease genes.</title>
        <authorList>
            <person name="Kusuda J."/>
            <person name="Osada N."/>
            <person name="Hida M."/>
            <person name="Sugano S."/>
            <person name="Hashimoto K."/>
        </authorList>
    </citation>
    <scope>NUCLEOTIDE SEQUENCE [LARGE SCALE MRNA]</scope>
    <source>
        <tissue>Temporal cortex</tissue>
    </source>
</reference>
<name>ETFA_MACFA</name>
<organism>
    <name type="scientific">Macaca fascicularis</name>
    <name type="common">Crab-eating macaque</name>
    <name type="synonym">Cynomolgus monkey</name>
    <dbReference type="NCBI Taxonomy" id="9541"/>
    <lineage>
        <taxon>Eukaryota</taxon>
        <taxon>Metazoa</taxon>
        <taxon>Chordata</taxon>
        <taxon>Craniata</taxon>
        <taxon>Vertebrata</taxon>
        <taxon>Euteleostomi</taxon>
        <taxon>Mammalia</taxon>
        <taxon>Eutheria</taxon>
        <taxon>Euarchontoglires</taxon>
        <taxon>Primates</taxon>
        <taxon>Haplorrhini</taxon>
        <taxon>Catarrhini</taxon>
        <taxon>Cercopithecidae</taxon>
        <taxon>Cercopithecinae</taxon>
        <taxon>Macaca</taxon>
    </lineage>
</organism>
<evidence type="ECO:0000250" key="1">
    <source>
        <dbReference type="UniProtKB" id="P13804"/>
    </source>
</evidence>
<evidence type="ECO:0000250" key="2">
    <source>
        <dbReference type="UniProtKB" id="Q99LC5"/>
    </source>
</evidence>
<evidence type="ECO:0000255" key="3"/>
<evidence type="ECO:0000305" key="4"/>
<comment type="function">
    <text evidence="1">Heterodimeric electron transfer flavoprotein that accepts electrons from several mitochondrial dehydrogenases, including acyl-CoA dehydrogenases, glutaryl-CoA and sarcosine dehydrogenase. It transfers the electrons to the main mitochondrial respiratory chain via ETF-ubiquinone oxidoreductase (ETF dehydrogenase). Required for normal mitochondrial fatty acid oxidation and normal amino acid metabolism.</text>
</comment>
<comment type="cofactor">
    <cofactor evidence="1">
        <name>FAD</name>
        <dbReference type="ChEBI" id="CHEBI:57692"/>
    </cofactor>
    <text evidence="1">Binds 1 FAD per dimer.</text>
</comment>
<comment type="subunit">
    <text evidence="1 2">Heterodimer composed of ETFA and ETFB. Identified in a complex that contains ETFA, ETFB and ETFRF1. Interaction with ETFRF1 promotes dissociation of the bound FAD and loss of electron transfer activity (By similarity). Interacts with TASOR (By similarity).</text>
</comment>
<comment type="subcellular location">
    <subcellularLocation>
        <location evidence="1">Mitochondrion matrix</location>
    </subcellularLocation>
</comment>
<comment type="domain">
    <text evidence="1">Domain I shares an identical polypeptide fold with the beta subunit ETFB though there is no sequence similarity.</text>
</comment>
<comment type="similarity">
    <text evidence="4">Belongs to the ETF alpha-subunit/FixB family.</text>
</comment>
<proteinExistence type="evidence at transcript level"/>
<sequence length="333" mass="35041">MFRAAAPGQLRRAASSLRFQSTLVIAEHANDSLAPITLNTITAATRLGGEVSCLVAGTKCDKVAQDLCKVAGIAKVLVAQHDAYRGLLAEDLTPLILATQKQFNYTHICAGASAFGKNLLPRVAAKLEVAPISDIIAIKSPDTFVRTIYAGNALCTVKCDEKVKVFSVRGTSFEAAATSGGTASSEKASSTSPVEISEWLDQKLTKSDRPELTGAKVVVSGGRGLKSGENFKLLYDLADQLHAAVGASRAAVDAGFVPNDMQVGQTGKIVAPELYIAVGISGAIQHLAGMKDSKTIVAINKDPEAPIFQVADYGIVADLFKVVPEMTEILKKK</sequence>